<protein>
    <recommendedName>
        <fullName evidence="2">Ornithine carbamoyltransferase</fullName>
        <shortName evidence="2">OTCase</shortName>
        <ecNumber evidence="2">2.1.3.3</ecNumber>
    </recommendedName>
</protein>
<organism>
    <name type="scientific">Streptococcus suis (strain 98HAH33)</name>
    <dbReference type="NCBI Taxonomy" id="391296"/>
    <lineage>
        <taxon>Bacteria</taxon>
        <taxon>Bacillati</taxon>
        <taxon>Bacillota</taxon>
        <taxon>Bacilli</taxon>
        <taxon>Lactobacillales</taxon>
        <taxon>Streptococcaceae</taxon>
        <taxon>Streptococcus</taxon>
    </lineage>
</organism>
<reference key="1">
    <citation type="journal article" date="2007" name="PLoS ONE">
        <title>A glimpse of streptococcal toxic shock syndrome from comparative genomics of S. suis 2 Chinese isolates.</title>
        <authorList>
            <person name="Chen C."/>
            <person name="Tang J."/>
            <person name="Dong W."/>
            <person name="Wang C."/>
            <person name="Feng Y."/>
            <person name="Wang J."/>
            <person name="Zheng F."/>
            <person name="Pan X."/>
            <person name="Liu D."/>
            <person name="Li M."/>
            <person name="Song Y."/>
            <person name="Zhu X."/>
            <person name="Sun H."/>
            <person name="Feng T."/>
            <person name="Guo Z."/>
            <person name="Ju A."/>
            <person name="Ge J."/>
            <person name="Dong Y."/>
            <person name="Sun W."/>
            <person name="Jiang Y."/>
            <person name="Wang J."/>
            <person name="Yan J."/>
            <person name="Yang H."/>
            <person name="Wang X."/>
            <person name="Gao G.F."/>
            <person name="Yang R."/>
            <person name="Wang J."/>
            <person name="Yu J."/>
        </authorList>
    </citation>
    <scope>NUCLEOTIDE SEQUENCE [LARGE SCALE GENOMIC DNA]</scope>
    <source>
        <strain>98HAH33</strain>
    </source>
</reference>
<accession>A4W094</accession>
<dbReference type="EC" id="2.1.3.3" evidence="2"/>
<dbReference type="EMBL" id="CP000408">
    <property type="protein sequence ID" value="ABP91783.1"/>
    <property type="molecule type" value="Genomic_DNA"/>
</dbReference>
<dbReference type="SMR" id="A4W094"/>
<dbReference type="KEGG" id="ssv:SSU98_0625"/>
<dbReference type="HOGENOM" id="CLU_043846_3_1_9"/>
<dbReference type="UniPathway" id="UPA00254">
    <property type="reaction ID" value="UER00365"/>
</dbReference>
<dbReference type="GO" id="GO:0005737">
    <property type="term" value="C:cytoplasm"/>
    <property type="evidence" value="ECO:0007669"/>
    <property type="project" value="UniProtKB-SubCell"/>
</dbReference>
<dbReference type="GO" id="GO:0016597">
    <property type="term" value="F:amino acid binding"/>
    <property type="evidence" value="ECO:0007669"/>
    <property type="project" value="InterPro"/>
</dbReference>
<dbReference type="GO" id="GO:0004585">
    <property type="term" value="F:ornithine carbamoyltransferase activity"/>
    <property type="evidence" value="ECO:0007669"/>
    <property type="project" value="UniProtKB-UniRule"/>
</dbReference>
<dbReference type="GO" id="GO:0042450">
    <property type="term" value="P:arginine biosynthetic process via ornithine"/>
    <property type="evidence" value="ECO:0007669"/>
    <property type="project" value="TreeGrafter"/>
</dbReference>
<dbReference type="GO" id="GO:0019547">
    <property type="term" value="P:arginine catabolic process to ornithine"/>
    <property type="evidence" value="ECO:0007669"/>
    <property type="project" value="UniProtKB-UniRule"/>
</dbReference>
<dbReference type="GO" id="GO:0019240">
    <property type="term" value="P:citrulline biosynthetic process"/>
    <property type="evidence" value="ECO:0007669"/>
    <property type="project" value="TreeGrafter"/>
</dbReference>
<dbReference type="FunFam" id="3.40.50.1370:FF:000004">
    <property type="entry name" value="Ornithine carbamoyltransferase"/>
    <property type="match status" value="1"/>
</dbReference>
<dbReference type="Gene3D" id="3.40.50.1370">
    <property type="entry name" value="Aspartate/ornithine carbamoyltransferase"/>
    <property type="match status" value="2"/>
</dbReference>
<dbReference type="HAMAP" id="MF_01109">
    <property type="entry name" value="OTCase"/>
    <property type="match status" value="1"/>
</dbReference>
<dbReference type="InterPro" id="IPR006132">
    <property type="entry name" value="Asp/Orn_carbamoyltranf_P-bd"/>
</dbReference>
<dbReference type="InterPro" id="IPR006130">
    <property type="entry name" value="Asp/Orn_carbamoylTrfase"/>
</dbReference>
<dbReference type="InterPro" id="IPR036901">
    <property type="entry name" value="Asp/Orn_carbamoylTrfase_sf"/>
</dbReference>
<dbReference type="InterPro" id="IPR006131">
    <property type="entry name" value="Asp_carbamoyltransf_Asp/Orn-bd"/>
</dbReference>
<dbReference type="InterPro" id="IPR002292">
    <property type="entry name" value="Orn/put_carbamltrans"/>
</dbReference>
<dbReference type="InterPro" id="IPR024904">
    <property type="entry name" value="OTCase_ArgI"/>
</dbReference>
<dbReference type="NCBIfam" id="TIGR00658">
    <property type="entry name" value="orni_carb_tr"/>
    <property type="match status" value="1"/>
</dbReference>
<dbReference type="NCBIfam" id="NF001986">
    <property type="entry name" value="PRK00779.1"/>
    <property type="match status" value="1"/>
</dbReference>
<dbReference type="PANTHER" id="PTHR45753:SF1">
    <property type="entry name" value="ORNITHINE CARBAMOYLTRANSFERASE, CATABOLIC"/>
    <property type="match status" value="1"/>
</dbReference>
<dbReference type="PANTHER" id="PTHR45753">
    <property type="entry name" value="ORNITHINE CARBAMOYLTRANSFERASE, MITOCHONDRIAL"/>
    <property type="match status" value="1"/>
</dbReference>
<dbReference type="Pfam" id="PF00185">
    <property type="entry name" value="OTCace"/>
    <property type="match status" value="1"/>
</dbReference>
<dbReference type="Pfam" id="PF02729">
    <property type="entry name" value="OTCace_N"/>
    <property type="match status" value="1"/>
</dbReference>
<dbReference type="PRINTS" id="PR00100">
    <property type="entry name" value="AOTCASE"/>
</dbReference>
<dbReference type="PRINTS" id="PR00102">
    <property type="entry name" value="OTCASE"/>
</dbReference>
<dbReference type="SUPFAM" id="SSF53671">
    <property type="entry name" value="Aspartate/ornithine carbamoyltransferase"/>
    <property type="match status" value="1"/>
</dbReference>
<dbReference type="PROSITE" id="PS00097">
    <property type="entry name" value="CARBAMOYLTRANSFERASE"/>
    <property type="match status" value="1"/>
</dbReference>
<name>OTC_STRS2</name>
<feature type="chain" id="PRO_1000065128" description="Ornithine carbamoyltransferase">
    <location>
        <begin position="1"/>
        <end position="337"/>
    </location>
</feature>
<feature type="binding site" evidence="2">
    <location>
        <begin position="57"/>
        <end position="60"/>
    </location>
    <ligand>
        <name>carbamoyl phosphate</name>
        <dbReference type="ChEBI" id="CHEBI:58228"/>
    </ligand>
</feature>
<feature type="binding site" evidence="2">
    <location>
        <position position="84"/>
    </location>
    <ligand>
        <name>carbamoyl phosphate</name>
        <dbReference type="ChEBI" id="CHEBI:58228"/>
    </ligand>
</feature>
<feature type="binding site" evidence="2">
    <location>
        <position position="108"/>
    </location>
    <ligand>
        <name>carbamoyl phosphate</name>
        <dbReference type="ChEBI" id="CHEBI:58228"/>
    </ligand>
</feature>
<feature type="binding site" evidence="2">
    <location>
        <begin position="135"/>
        <end position="138"/>
    </location>
    <ligand>
        <name>carbamoyl phosphate</name>
        <dbReference type="ChEBI" id="CHEBI:58228"/>
    </ligand>
</feature>
<feature type="binding site" evidence="2">
    <location>
        <position position="167"/>
    </location>
    <ligand>
        <name>L-ornithine</name>
        <dbReference type="ChEBI" id="CHEBI:46911"/>
    </ligand>
</feature>
<feature type="binding site" evidence="2">
    <location>
        <position position="231"/>
    </location>
    <ligand>
        <name>L-ornithine</name>
        <dbReference type="ChEBI" id="CHEBI:46911"/>
    </ligand>
</feature>
<feature type="binding site" evidence="2">
    <location>
        <begin position="235"/>
        <end position="236"/>
    </location>
    <ligand>
        <name>L-ornithine</name>
        <dbReference type="ChEBI" id="CHEBI:46911"/>
    </ligand>
</feature>
<feature type="binding site" evidence="2">
    <location>
        <begin position="272"/>
        <end position="273"/>
    </location>
    <ligand>
        <name>carbamoyl phosphate</name>
        <dbReference type="ChEBI" id="CHEBI:58228"/>
    </ligand>
</feature>
<feature type="binding site" evidence="2">
    <location>
        <position position="317"/>
    </location>
    <ligand>
        <name>carbamoyl phosphate</name>
        <dbReference type="ChEBI" id="CHEBI:58228"/>
    </ligand>
</feature>
<proteinExistence type="inferred from homology"/>
<keyword id="KW-0056">Arginine metabolism</keyword>
<keyword id="KW-0963">Cytoplasm</keyword>
<keyword id="KW-0808">Transferase</keyword>
<evidence type="ECO:0000250" key="1"/>
<evidence type="ECO:0000255" key="2">
    <source>
        <dbReference type="HAMAP-Rule" id="MF_01109"/>
    </source>
</evidence>
<sequence>MTNVFKGRHFLAEKDFTRAELEWLIDFSAHLKDLKKRNIPHRYLEGKNIALLFEKTSTRTRAAFTVASIDLGAHPEYLGANDIQLGKKESTEDTAKVLGRMFDGIEFRGFSQKMVEELAEFSGVPVWNGLTDAWHPTQMLADYLTVKENFGKLEGLTLVYCGDGRNNVANSLLVTGAILGVNVHIFSPKELFPEEEVVALAEGFAKESGARVLITDNADEAVKGADVLYTDVWVSMGEEDKFAERVALLKPYQVNMELVKKAENENLIFLHCLPAFHDTNTVYGKDVAEKFGVEEMEVTDEVFRSKYARHFDQAENRMHTIKAVMAATLGDPFVPRV</sequence>
<comment type="function">
    <text evidence="1">Reversibly catalyzes the transfer of the carbamoyl group from carbamoyl phosphate (CP) to the N(epsilon) atom of ornithine (ORN) to produce L-citrulline.</text>
</comment>
<comment type="catalytic activity">
    <reaction evidence="2">
        <text>carbamoyl phosphate + L-ornithine = L-citrulline + phosphate + H(+)</text>
        <dbReference type="Rhea" id="RHEA:19513"/>
        <dbReference type="ChEBI" id="CHEBI:15378"/>
        <dbReference type="ChEBI" id="CHEBI:43474"/>
        <dbReference type="ChEBI" id="CHEBI:46911"/>
        <dbReference type="ChEBI" id="CHEBI:57743"/>
        <dbReference type="ChEBI" id="CHEBI:58228"/>
        <dbReference type="EC" id="2.1.3.3"/>
    </reaction>
</comment>
<comment type="pathway">
    <text evidence="2">Amino-acid degradation; L-arginine degradation via ADI pathway; carbamoyl phosphate from L-arginine: step 2/2.</text>
</comment>
<comment type="subcellular location">
    <subcellularLocation>
        <location evidence="2">Cytoplasm</location>
    </subcellularLocation>
</comment>
<comment type="similarity">
    <text evidence="2">Belongs to the aspartate/ornithine carbamoyltransferase superfamily. OTCase family.</text>
</comment>
<gene>
    <name evidence="2" type="primary">arcB</name>
    <name type="ordered locus">SSU98_0625</name>
</gene>